<reference key="1">
    <citation type="submission" date="2008-05" db="EMBL/GenBank/DDBJ databases">
        <title>Complete sequence of Chlorobium limicola DSM 245.</title>
        <authorList>
            <consortium name="US DOE Joint Genome Institute"/>
            <person name="Lucas S."/>
            <person name="Copeland A."/>
            <person name="Lapidus A."/>
            <person name="Glavina del Rio T."/>
            <person name="Dalin E."/>
            <person name="Tice H."/>
            <person name="Bruce D."/>
            <person name="Goodwin L."/>
            <person name="Pitluck S."/>
            <person name="Schmutz J."/>
            <person name="Larimer F."/>
            <person name="Land M."/>
            <person name="Hauser L."/>
            <person name="Kyrpides N."/>
            <person name="Ovchinnikova G."/>
            <person name="Zhao F."/>
            <person name="Li T."/>
            <person name="Liu Z."/>
            <person name="Overmann J."/>
            <person name="Bryant D.A."/>
            <person name="Richardson P."/>
        </authorList>
    </citation>
    <scope>NUCLEOTIDE SEQUENCE [LARGE SCALE GENOMIC DNA]</scope>
    <source>
        <strain>DSM 245 / NBRC 103803 / 6330</strain>
    </source>
</reference>
<protein>
    <recommendedName>
        <fullName evidence="1">Argininosuccinate synthase</fullName>
        <ecNumber evidence="1">6.3.4.5</ecNumber>
    </recommendedName>
    <alternativeName>
        <fullName evidence="1">Citrulline--aspartate ligase</fullName>
    </alternativeName>
</protein>
<accession>B3ECP2</accession>
<dbReference type="EC" id="6.3.4.5" evidence="1"/>
<dbReference type="EMBL" id="CP001097">
    <property type="protein sequence ID" value="ACD90317.1"/>
    <property type="molecule type" value="Genomic_DNA"/>
</dbReference>
<dbReference type="RefSeq" id="WP_012466194.1">
    <property type="nucleotide sequence ID" value="NC_010803.1"/>
</dbReference>
<dbReference type="SMR" id="B3ECP2"/>
<dbReference type="STRING" id="290315.Clim_1250"/>
<dbReference type="KEGG" id="cli:Clim_1250"/>
<dbReference type="eggNOG" id="COG0137">
    <property type="taxonomic scope" value="Bacteria"/>
</dbReference>
<dbReference type="HOGENOM" id="CLU_032784_4_2_10"/>
<dbReference type="OrthoDB" id="9801641at2"/>
<dbReference type="UniPathway" id="UPA00068">
    <property type="reaction ID" value="UER00113"/>
</dbReference>
<dbReference type="Proteomes" id="UP000008841">
    <property type="component" value="Chromosome"/>
</dbReference>
<dbReference type="GO" id="GO:0005737">
    <property type="term" value="C:cytoplasm"/>
    <property type="evidence" value="ECO:0007669"/>
    <property type="project" value="UniProtKB-SubCell"/>
</dbReference>
<dbReference type="GO" id="GO:0004055">
    <property type="term" value="F:argininosuccinate synthase activity"/>
    <property type="evidence" value="ECO:0007669"/>
    <property type="project" value="UniProtKB-UniRule"/>
</dbReference>
<dbReference type="GO" id="GO:0005524">
    <property type="term" value="F:ATP binding"/>
    <property type="evidence" value="ECO:0007669"/>
    <property type="project" value="UniProtKB-UniRule"/>
</dbReference>
<dbReference type="GO" id="GO:0000053">
    <property type="term" value="P:argininosuccinate metabolic process"/>
    <property type="evidence" value="ECO:0007669"/>
    <property type="project" value="TreeGrafter"/>
</dbReference>
<dbReference type="GO" id="GO:0006526">
    <property type="term" value="P:L-arginine biosynthetic process"/>
    <property type="evidence" value="ECO:0007669"/>
    <property type="project" value="UniProtKB-UniRule"/>
</dbReference>
<dbReference type="GO" id="GO:0000050">
    <property type="term" value="P:urea cycle"/>
    <property type="evidence" value="ECO:0007669"/>
    <property type="project" value="TreeGrafter"/>
</dbReference>
<dbReference type="CDD" id="cd01999">
    <property type="entry name" value="ASS"/>
    <property type="match status" value="1"/>
</dbReference>
<dbReference type="FunFam" id="3.40.50.620:FF:000019">
    <property type="entry name" value="Argininosuccinate synthase"/>
    <property type="match status" value="1"/>
</dbReference>
<dbReference type="FunFam" id="3.90.1260.10:FF:000007">
    <property type="entry name" value="Argininosuccinate synthase"/>
    <property type="match status" value="1"/>
</dbReference>
<dbReference type="Gene3D" id="3.90.1260.10">
    <property type="entry name" value="Argininosuccinate synthetase, chain A, domain 2"/>
    <property type="match status" value="1"/>
</dbReference>
<dbReference type="Gene3D" id="3.40.50.620">
    <property type="entry name" value="HUPs"/>
    <property type="match status" value="1"/>
</dbReference>
<dbReference type="Gene3D" id="1.20.5.470">
    <property type="entry name" value="Single helix bin"/>
    <property type="match status" value="1"/>
</dbReference>
<dbReference type="HAMAP" id="MF_00005">
    <property type="entry name" value="Arg_succ_synth_type1"/>
    <property type="match status" value="1"/>
</dbReference>
<dbReference type="InterPro" id="IPR048268">
    <property type="entry name" value="Arginosuc_syn_C"/>
</dbReference>
<dbReference type="InterPro" id="IPR048267">
    <property type="entry name" value="Arginosuc_syn_N"/>
</dbReference>
<dbReference type="InterPro" id="IPR001518">
    <property type="entry name" value="Arginosuc_synth"/>
</dbReference>
<dbReference type="InterPro" id="IPR018223">
    <property type="entry name" value="Arginosuc_synth_CS"/>
</dbReference>
<dbReference type="InterPro" id="IPR023434">
    <property type="entry name" value="Arginosuc_synth_type_1_subfam"/>
</dbReference>
<dbReference type="InterPro" id="IPR024074">
    <property type="entry name" value="AS_cat/multimer_dom_body"/>
</dbReference>
<dbReference type="InterPro" id="IPR014729">
    <property type="entry name" value="Rossmann-like_a/b/a_fold"/>
</dbReference>
<dbReference type="NCBIfam" id="TIGR00032">
    <property type="entry name" value="argG"/>
    <property type="match status" value="1"/>
</dbReference>
<dbReference type="NCBIfam" id="NF001770">
    <property type="entry name" value="PRK00509.1"/>
    <property type="match status" value="1"/>
</dbReference>
<dbReference type="PANTHER" id="PTHR11587">
    <property type="entry name" value="ARGININOSUCCINATE SYNTHASE"/>
    <property type="match status" value="1"/>
</dbReference>
<dbReference type="PANTHER" id="PTHR11587:SF2">
    <property type="entry name" value="ARGININOSUCCINATE SYNTHASE"/>
    <property type="match status" value="1"/>
</dbReference>
<dbReference type="Pfam" id="PF20979">
    <property type="entry name" value="Arginosuc_syn_C"/>
    <property type="match status" value="1"/>
</dbReference>
<dbReference type="Pfam" id="PF00764">
    <property type="entry name" value="Arginosuc_synth"/>
    <property type="match status" value="1"/>
</dbReference>
<dbReference type="SUPFAM" id="SSF52402">
    <property type="entry name" value="Adenine nucleotide alpha hydrolases-like"/>
    <property type="match status" value="1"/>
</dbReference>
<dbReference type="SUPFAM" id="SSF69864">
    <property type="entry name" value="Argininosuccinate synthetase, C-terminal domain"/>
    <property type="match status" value="1"/>
</dbReference>
<dbReference type="PROSITE" id="PS00564">
    <property type="entry name" value="ARGININOSUCCIN_SYN_1"/>
    <property type="match status" value="1"/>
</dbReference>
<dbReference type="PROSITE" id="PS00565">
    <property type="entry name" value="ARGININOSUCCIN_SYN_2"/>
    <property type="match status" value="1"/>
</dbReference>
<comment type="catalytic activity">
    <reaction evidence="1">
        <text>L-citrulline + L-aspartate + ATP = 2-(N(omega)-L-arginino)succinate + AMP + diphosphate + H(+)</text>
        <dbReference type="Rhea" id="RHEA:10932"/>
        <dbReference type="ChEBI" id="CHEBI:15378"/>
        <dbReference type="ChEBI" id="CHEBI:29991"/>
        <dbReference type="ChEBI" id="CHEBI:30616"/>
        <dbReference type="ChEBI" id="CHEBI:33019"/>
        <dbReference type="ChEBI" id="CHEBI:57472"/>
        <dbReference type="ChEBI" id="CHEBI:57743"/>
        <dbReference type="ChEBI" id="CHEBI:456215"/>
        <dbReference type="EC" id="6.3.4.5"/>
    </reaction>
</comment>
<comment type="pathway">
    <text evidence="1">Amino-acid biosynthesis; L-arginine biosynthesis; L-arginine from L-ornithine and carbamoyl phosphate: step 2/3.</text>
</comment>
<comment type="subunit">
    <text evidence="1">Homotetramer.</text>
</comment>
<comment type="subcellular location">
    <subcellularLocation>
        <location evidence="1">Cytoplasm</location>
    </subcellularLocation>
</comment>
<comment type="similarity">
    <text evidence="1">Belongs to the argininosuccinate synthase family. Type 1 subfamily.</text>
</comment>
<evidence type="ECO:0000255" key="1">
    <source>
        <dbReference type="HAMAP-Rule" id="MF_00005"/>
    </source>
</evidence>
<proteinExistence type="inferred from homology"/>
<feature type="chain" id="PRO_1000089026" description="Argininosuccinate synthase">
    <location>
        <begin position="1"/>
        <end position="400"/>
    </location>
</feature>
<feature type="binding site" evidence="1">
    <location>
        <begin position="9"/>
        <end position="17"/>
    </location>
    <ligand>
        <name>ATP</name>
        <dbReference type="ChEBI" id="CHEBI:30616"/>
    </ligand>
</feature>
<feature type="binding site" evidence="1">
    <location>
        <position position="87"/>
    </location>
    <ligand>
        <name>L-citrulline</name>
        <dbReference type="ChEBI" id="CHEBI:57743"/>
    </ligand>
</feature>
<feature type="binding site" evidence="1">
    <location>
        <position position="117"/>
    </location>
    <ligand>
        <name>ATP</name>
        <dbReference type="ChEBI" id="CHEBI:30616"/>
    </ligand>
</feature>
<feature type="binding site" evidence="1">
    <location>
        <position position="119"/>
    </location>
    <ligand>
        <name>L-aspartate</name>
        <dbReference type="ChEBI" id="CHEBI:29991"/>
    </ligand>
</feature>
<feature type="binding site" evidence="1">
    <location>
        <position position="123"/>
    </location>
    <ligand>
        <name>L-aspartate</name>
        <dbReference type="ChEBI" id="CHEBI:29991"/>
    </ligand>
</feature>
<feature type="binding site" evidence="1">
    <location>
        <position position="123"/>
    </location>
    <ligand>
        <name>L-citrulline</name>
        <dbReference type="ChEBI" id="CHEBI:57743"/>
    </ligand>
</feature>
<feature type="binding site" evidence="1">
    <location>
        <position position="124"/>
    </location>
    <ligand>
        <name>L-aspartate</name>
        <dbReference type="ChEBI" id="CHEBI:29991"/>
    </ligand>
</feature>
<feature type="binding site" evidence="1">
    <location>
        <position position="127"/>
    </location>
    <ligand>
        <name>L-citrulline</name>
        <dbReference type="ChEBI" id="CHEBI:57743"/>
    </ligand>
</feature>
<feature type="binding site" evidence="1">
    <location>
        <position position="176"/>
    </location>
    <ligand>
        <name>L-citrulline</name>
        <dbReference type="ChEBI" id="CHEBI:57743"/>
    </ligand>
</feature>
<feature type="binding site" evidence="1">
    <location>
        <position position="185"/>
    </location>
    <ligand>
        <name>L-citrulline</name>
        <dbReference type="ChEBI" id="CHEBI:57743"/>
    </ligand>
</feature>
<feature type="binding site" evidence="1">
    <location>
        <position position="261"/>
    </location>
    <ligand>
        <name>L-citrulline</name>
        <dbReference type="ChEBI" id="CHEBI:57743"/>
    </ligand>
</feature>
<feature type="binding site" evidence="1">
    <location>
        <position position="273"/>
    </location>
    <ligand>
        <name>L-citrulline</name>
        <dbReference type="ChEBI" id="CHEBI:57743"/>
    </ligand>
</feature>
<sequence length="400" mass="44313">MSKEKIALAYSGGLDTSVMIKWLKDKYDAEIVAVTGNLGQQKEIENLESKAYSTGASAFRFVDLRKTFVEEYIWRALKAGALYEDVYPLATALGRPLLAKALVDVALEENCTMLAHGCTGKGNDQVRFEVTFASLAPHLKILAPLREWEFTSREAEIAYALEHNIPVSATKKSPYSIDENIWGISIECGVLEDPMVTPPEDAYQITTSPENAPDTPASVEIEFVKGIPVALDGERMSGLDMIQKLNDIGAANGIGRLDMIENRVVGIKSREIYEAPAATILHFAHRELERLTLEKTVFQYKKNISQDYANIIYNGTWFSPMRKALDAFVDETQKPVTGLVRLKLYKGGISLLGRNSPNSLYNEELATYTEADTFNHKAAAGFIHLYGLGMKTFSQVNPGL</sequence>
<keyword id="KW-0028">Amino-acid biosynthesis</keyword>
<keyword id="KW-0055">Arginine biosynthesis</keyword>
<keyword id="KW-0067">ATP-binding</keyword>
<keyword id="KW-0963">Cytoplasm</keyword>
<keyword id="KW-0436">Ligase</keyword>
<keyword id="KW-0547">Nucleotide-binding</keyword>
<gene>
    <name evidence="1" type="primary">argG</name>
    <name type="ordered locus">Clim_1250</name>
</gene>
<name>ASSY_CHLL2</name>
<organism>
    <name type="scientific">Chlorobium limicola (strain DSM 245 / NBRC 103803 / 6330)</name>
    <dbReference type="NCBI Taxonomy" id="290315"/>
    <lineage>
        <taxon>Bacteria</taxon>
        <taxon>Pseudomonadati</taxon>
        <taxon>Chlorobiota</taxon>
        <taxon>Chlorobiia</taxon>
        <taxon>Chlorobiales</taxon>
        <taxon>Chlorobiaceae</taxon>
        <taxon>Chlorobium/Pelodictyon group</taxon>
        <taxon>Chlorobium</taxon>
    </lineage>
</organism>